<organism>
    <name type="scientific">Platymeris rhadamanthus</name>
    <name type="common">Red spot assassin bug</name>
    <dbReference type="NCBI Taxonomy" id="1134088"/>
    <lineage>
        <taxon>Eukaryota</taxon>
        <taxon>Metazoa</taxon>
        <taxon>Ecdysozoa</taxon>
        <taxon>Arthropoda</taxon>
        <taxon>Hexapoda</taxon>
        <taxon>Insecta</taxon>
        <taxon>Pterygota</taxon>
        <taxon>Neoptera</taxon>
        <taxon>Paraneoptera</taxon>
        <taxon>Hemiptera</taxon>
        <taxon>Heteroptera</taxon>
        <taxon>Panheteroptera</taxon>
        <taxon>Cimicomorpha</taxon>
        <taxon>Reduviidae</taxon>
        <taxon>Platymeris</taxon>
    </lineage>
</organism>
<evidence type="ECO:0000250" key="1">
    <source>
        <dbReference type="UniProtKB" id="A0A7M6UNN1"/>
    </source>
</evidence>
<evidence type="ECO:0000255" key="2">
    <source>
        <dbReference type="PROSITE-ProRule" id="PRU00776"/>
    </source>
</evidence>
<evidence type="ECO:0000269" key="3">
    <source>
    </source>
</evidence>
<evidence type="ECO:0000303" key="4">
    <source>
    </source>
</evidence>
<evidence type="ECO:0000305" key="5"/>
<evidence type="ECO:0000305" key="6">
    <source>
    </source>
</evidence>
<evidence type="ECO:0000312" key="7">
    <source>
        <dbReference type="EMBL" id="QHB21531.1"/>
    </source>
</evidence>
<keyword id="KW-1015">Disulfide bond</keyword>
<keyword id="KW-0646">Protease inhibitor</keyword>
<keyword id="KW-0677">Repeat</keyword>
<keyword id="KW-0964">Secreted</keyword>
<keyword id="KW-0722">Serine protease inhibitor</keyword>
<keyword id="KW-0732">Signal</keyword>
<feature type="signal peptide" evidence="6">
    <location>
        <begin position="1"/>
        <end position="20"/>
    </location>
</feature>
<feature type="chain" id="PRO_5025351512" description="U-reduvitoxin-Pr11a.1" evidence="3">
    <location>
        <begin position="21"/>
        <end position="59"/>
    </location>
</feature>
<feature type="chain" id="PRO_0000454315" description="U-reduvitoxin-Pr11a.2" evidence="3">
    <location>
        <begin position="60"/>
        <end position="97"/>
    </location>
</feature>
<feature type="domain" description="Pacifastin 1" evidence="2">
    <location>
        <begin position="22"/>
        <end position="59"/>
    </location>
</feature>
<feature type="domain" description="Pacifastin 2" evidence="2">
    <location>
        <begin position="62"/>
        <end position="97"/>
    </location>
</feature>
<feature type="region of interest" description="Pro-Pro-Arg motif necessary for proteolytic processing" evidence="6">
    <location>
        <begin position="57"/>
        <end position="59"/>
    </location>
</feature>
<feature type="site" description="Reactive bond" evidence="2">
    <location>
        <begin position="93"/>
        <end position="94"/>
    </location>
</feature>
<feature type="disulfide bond" evidence="6">
    <location>
        <begin position="24"/>
        <end position="42"/>
    </location>
</feature>
<feature type="disulfide bond" evidence="2">
    <location>
        <begin position="37"/>
        <end position="56"/>
    </location>
</feature>
<feature type="disulfide bond" evidence="2">
    <location>
        <begin position="40"/>
        <end position="51"/>
    </location>
</feature>
<feature type="disulfide bond" evidence="2">
    <location>
        <begin position="65"/>
        <end position="82"/>
    </location>
</feature>
<feature type="disulfide bond" evidence="2">
    <location>
        <begin position="77"/>
        <end position="96"/>
    </location>
</feature>
<feature type="disulfide bond" evidence="2">
    <location>
        <begin position="80"/>
        <end position="91"/>
    </location>
</feature>
<proteinExistence type="evidence at protein level"/>
<sequence length="97" mass="10426">MKTALFLVFALAFIAVEGKMSRACSKPGQTVLAPDGCNHCRCSEKGILMACTKMMCPPRTIEKSCKPGTTFKHKDGCNTCKCSDDGKNALCTSKLCL</sequence>
<dbReference type="EMBL" id="MN208342">
    <property type="protein sequence ID" value="QHB21531.1"/>
    <property type="molecule type" value="mRNA"/>
</dbReference>
<dbReference type="GO" id="GO:0005576">
    <property type="term" value="C:extracellular region"/>
    <property type="evidence" value="ECO:0007669"/>
    <property type="project" value="UniProtKB-SubCell"/>
</dbReference>
<dbReference type="GO" id="GO:0004867">
    <property type="term" value="F:serine-type endopeptidase inhibitor activity"/>
    <property type="evidence" value="ECO:0007669"/>
    <property type="project" value="UniProtKB-KW"/>
</dbReference>
<dbReference type="InterPro" id="IPR008037">
    <property type="entry name" value="Pacifastin_dom"/>
</dbReference>
<dbReference type="InterPro" id="IPR036201">
    <property type="entry name" value="Pacifastin_dom_sf"/>
</dbReference>
<dbReference type="Pfam" id="PF05375">
    <property type="entry name" value="Pacifastin_I"/>
    <property type="match status" value="2"/>
</dbReference>
<dbReference type="SUPFAM" id="SSF57283">
    <property type="entry name" value="PMP inhibitors"/>
    <property type="match status" value="2"/>
</dbReference>
<dbReference type="PROSITE" id="PS51446">
    <property type="entry name" value="PACIFASTIN"/>
    <property type="match status" value="2"/>
</dbReference>
<comment type="function">
    <text evidence="1">Inhibits trypsin activity and prophenoloxidase (PPO) activation, an enzyme essential for both clotting and insect innate immune responses. It does not inhibit activity of chymotrypsin and protease K, and has no effect on phenoloxidase (PO) activity.</text>
</comment>
<comment type="subcellular location">
    <subcellularLocation>
        <location evidence="3">Secreted</location>
    </subcellularLocation>
</comment>
<comment type="tissue specificity">
    <text evidence="6">Expressed by the venom gland.</text>
</comment>
<comment type="mass spectrometry" mass="4172.82" method="MALDI" evidence="3">
    <molecule>U-reduvitoxin-Pr11a.1</molecule>
    <text>Monoisotopic mass.</text>
</comment>
<comment type="mass spectrometry" mass="4070.81" method="MALDI" evidence="3">
    <molecule>U-reduvitoxin-Pr11a.2</molecule>
    <text>Monoisotopic mass.</text>
</comment>
<comment type="similarity">
    <text evidence="5">Belongs to the protease inhibitor I19 family.</text>
</comment>
<reference key="1">
    <citation type="journal article" date="2019" name="Toxins">
        <title>Missiles of mass disruption: composition and glandular origin of venom used as a projectile defensive weapon by the assassin bug Platymeris rhadamanthus.</title>
        <authorList>
            <person name="Walker A.A."/>
            <person name="Robinson S.D."/>
            <person name="Undheim E.A.B."/>
            <person name="Jin J."/>
            <person name="Han X."/>
            <person name="Fry B.G."/>
            <person name="Vetter I."/>
            <person name="King G.F."/>
        </authorList>
    </citation>
    <scope>NUCLEOTIDE SEQUENCE [MRNA]</scope>
    <scope>MASS SPECTROMETRY</scope>
    <scope>SUBCELLULAR LOCATION</scope>
    <source>
        <tissue>Venom</tissue>
        <tissue>Venom gland</tissue>
    </source>
</reference>
<accession>A0A6B9KZ79</accession>
<name>PI11A_PLARH</name>
<protein>
    <recommendedName>
        <fullName evidence="6">U-reduvitoxin-Pr11a</fullName>
        <shortName evidence="6">U-RDTX-Pr11a</shortName>
    </recommendedName>
    <alternativeName>
        <fullName evidence="7">Venom pacifastin domain peptide Pr11a</fullName>
    </alternativeName>
    <component>
        <recommendedName>
            <fullName evidence="4">U-reduvitoxin-Pr11a.1</fullName>
            <shortName evidence="4">U-RDTX-Pr11a.1</shortName>
        </recommendedName>
    </component>
    <component>
        <recommendedName>
            <fullName evidence="4">U-reduvitoxin-Pr11a.2</fullName>
            <shortName evidence="4">U-RDTX-Pr11a.2</shortName>
        </recommendedName>
    </component>
</protein>